<reference key="1">
    <citation type="journal article" date="2004" name="Genome Res.">
        <title>The status, quality, and expansion of the NIH full-length cDNA project: the Mammalian Gene Collection (MGC).</title>
        <authorList>
            <consortium name="The MGC Project Team"/>
        </authorList>
    </citation>
    <scope>NUCLEOTIDE SEQUENCE [LARGE SCALE MRNA]</scope>
    <source>
        <tissue>Embryo</tissue>
        <tissue>Liver</tissue>
        <tissue>Lung</tissue>
    </source>
</reference>
<reference key="2">
    <citation type="journal article" date="1996" name="J. Neurochem.">
        <title>Molecular cloning and characterization of annexin V-binding proteins with highly hydrophilic peptide structure.</title>
        <authorList>
            <person name="Ohsawa K."/>
            <person name="Imai Y."/>
            <person name="Ito D."/>
            <person name="Kohsaka S."/>
        </authorList>
    </citation>
    <scope>NUCLEOTIDE SEQUENCE [MRNA] OF 101-334</scope>
    <scope>INTERACTION WITH ANXA5</scope>
    <source>
        <strain>Wistar</strain>
        <tissue>Brain</tissue>
    </source>
</reference>
<reference key="3">
    <citation type="journal article" date="2012" name="Nat. Commun.">
        <title>Quantitative maps of protein phosphorylation sites across 14 different rat organs and tissues.</title>
        <authorList>
            <person name="Lundby A."/>
            <person name="Secher A."/>
            <person name="Lage K."/>
            <person name="Nordsborg N.B."/>
            <person name="Dmytriyev A."/>
            <person name="Lundby C."/>
            <person name="Olsen J.V."/>
        </authorList>
    </citation>
    <scope>PHOSPHORYLATION [LARGE SCALE ANALYSIS] AT SER-544; SER-553 AND SER-556</scope>
    <scope>IDENTIFICATION BY MASS SPECTROMETRY [LARGE SCALE ANALYSIS]</scope>
</reference>
<evidence type="ECO:0000250" key="1">
    <source>
        <dbReference type="UniProtKB" id="G0S8G9"/>
    </source>
</evidence>
<evidence type="ECO:0000250" key="2">
    <source>
        <dbReference type="UniProtKB" id="O60841"/>
    </source>
</evidence>
<evidence type="ECO:0000250" key="3">
    <source>
        <dbReference type="UniProtKB" id="Q05D44"/>
    </source>
</evidence>
<evidence type="ECO:0000255" key="4">
    <source>
        <dbReference type="PROSITE-ProRule" id="PRU01059"/>
    </source>
</evidence>
<evidence type="ECO:0000256" key="5">
    <source>
        <dbReference type="SAM" id="MobiDB-lite"/>
    </source>
</evidence>
<evidence type="ECO:0000269" key="6">
    <source>
    </source>
</evidence>
<evidence type="ECO:0000305" key="7"/>
<evidence type="ECO:0007744" key="8">
    <source>
    </source>
</evidence>
<keyword id="KW-0963">Cytoplasm</keyword>
<keyword id="KW-0342">GTP-binding</keyword>
<keyword id="KW-0378">Hydrolase</keyword>
<keyword id="KW-0396">Initiation factor</keyword>
<keyword id="KW-0479">Metal-binding</keyword>
<keyword id="KW-0547">Nucleotide-binding</keyword>
<keyword id="KW-0597">Phosphoprotein</keyword>
<keyword id="KW-0648">Protein biosynthesis</keyword>
<keyword id="KW-1185">Reference proteome</keyword>
<organism>
    <name type="scientific">Rattus norvegicus</name>
    <name type="common">Rat</name>
    <dbReference type="NCBI Taxonomy" id="10116"/>
    <lineage>
        <taxon>Eukaryota</taxon>
        <taxon>Metazoa</taxon>
        <taxon>Chordata</taxon>
        <taxon>Craniata</taxon>
        <taxon>Vertebrata</taxon>
        <taxon>Euteleostomi</taxon>
        <taxon>Mammalia</taxon>
        <taxon>Eutheria</taxon>
        <taxon>Euarchontoglires</taxon>
        <taxon>Glires</taxon>
        <taxon>Rodentia</taxon>
        <taxon>Myomorpha</taxon>
        <taxon>Muroidea</taxon>
        <taxon>Muridae</taxon>
        <taxon>Murinae</taxon>
        <taxon>Rattus</taxon>
    </lineage>
</organism>
<gene>
    <name type="primary">Eif5b</name>
    <name type="synonym">If2</name>
</gene>
<proteinExistence type="evidence at protein level"/>
<feature type="chain" id="PRO_0000354073" description="Eukaryotic translation initiation factor 5B">
    <location>
        <begin position="1"/>
        <end position="1216"/>
    </location>
</feature>
<feature type="domain" description="tr-type G" evidence="4">
    <location>
        <begin position="625"/>
        <end position="842"/>
    </location>
</feature>
<feature type="region of interest" description="Disordered" evidence="5">
    <location>
        <begin position="1"/>
        <end position="604"/>
    </location>
</feature>
<feature type="region of interest" description="G1" evidence="4">
    <location>
        <begin position="634"/>
        <end position="641"/>
    </location>
</feature>
<feature type="region of interest" description="G2" evidence="4">
    <location>
        <begin position="659"/>
        <end position="663"/>
    </location>
</feature>
<feature type="region of interest" description="G3" evidence="4">
    <location>
        <begin position="698"/>
        <end position="701"/>
    </location>
</feature>
<feature type="region of interest" description="G4" evidence="4">
    <location>
        <begin position="752"/>
        <end position="755"/>
    </location>
</feature>
<feature type="region of interest" description="G5" evidence="4">
    <location>
        <begin position="820"/>
        <end position="822"/>
    </location>
</feature>
<feature type="compositionally biased region" description="Basic and acidic residues" evidence="5">
    <location>
        <begin position="7"/>
        <end position="17"/>
    </location>
</feature>
<feature type="compositionally biased region" description="Low complexity" evidence="5">
    <location>
        <begin position="19"/>
        <end position="32"/>
    </location>
</feature>
<feature type="compositionally biased region" description="Basic and acidic residues" evidence="5">
    <location>
        <begin position="49"/>
        <end position="63"/>
    </location>
</feature>
<feature type="compositionally biased region" description="Basic residues" evidence="5">
    <location>
        <begin position="96"/>
        <end position="106"/>
    </location>
</feature>
<feature type="compositionally biased region" description="Acidic residues" evidence="5">
    <location>
        <begin position="110"/>
        <end position="119"/>
    </location>
</feature>
<feature type="compositionally biased region" description="Basic residues" evidence="5">
    <location>
        <begin position="148"/>
        <end position="160"/>
    </location>
</feature>
<feature type="compositionally biased region" description="Basic and acidic residues" evidence="5">
    <location>
        <begin position="171"/>
        <end position="180"/>
    </location>
</feature>
<feature type="compositionally biased region" description="Basic and acidic residues" evidence="5">
    <location>
        <begin position="232"/>
        <end position="279"/>
    </location>
</feature>
<feature type="compositionally biased region" description="Basic and acidic residues" evidence="5">
    <location>
        <begin position="322"/>
        <end position="333"/>
    </location>
</feature>
<feature type="compositionally biased region" description="Basic and acidic residues" evidence="5">
    <location>
        <begin position="348"/>
        <end position="422"/>
    </location>
</feature>
<feature type="compositionally biased region" description="Basic and acidic residues" evidence="5">
    <location>
        <begin position="433"/>
        <end position="448"/>
    </location>
</feature>
<feature type="compositionally biased region" description="Acidic residues" evidence="5">
    <location>
        <begin position="490"/>
        <end position="510"/>
    </location>
</feature>
<feature type="compositionally biased region" description="Basic and acidic residues" evidence="5">
    <location>
        <begin position="511"/>
        <end position="525"/>
    </location>
</feature>
<feature type="compositionally biased region" description="Acidic residues" evidence="5">
    <location>
        <begin position="526"/>
        <end position="562"/>
    </location>
</feature>
<feature type="compositionally biased region" description="Basic and acidic residues" evidence="5">
    <location>
        <begin position="563"/>
        <end position="584"/>
    </location>
</feature>
<feature type="compositionally biased region" description="Basic and acidic residues" evidence="5">
    <location>
        <begin position="594"/>
        <end position="604"/>
    </location>
</feature>
<feature type="active site" evidence="2">
    <location>
        <position position="702"/>
    </location>
</feature>
<feature type="binding site" evidence="2">
    <location>
        <begin position="636"/>
        <end position="642"/>
    </location>
    <ligand>
        <name>GTP</name>
        <dbReference type="ChEBI" id="CHEBI:37565"/>
    </ligand>
</feature>
<feature type="binding site" evidence="2">
    <location>
        <begin position="659"/>
        <end position="661"/>
    </location>
    <ligand>
        <name>GTP</name>
        <dbReference type="ChEBI" id="CHEBI:37565"/>
    </ligand>
</feature>
<feature type="binding site" evidence="2">
    <location>
        <begin position="752"/>
        <end position="753"/>
    </location>
    <ligand>
        <name>GTP</name>
        <dbReference type="ChEBI" id="CHEBI:37565"/>
    </ligand>
</feature>
<feature type="binding site" evidence="2">
    <location>
        <begin position="755"/>
        <end position="756"/>
    </location>
    <ligand>
        <name>GTP</name>
        <dbReference type="ChEBI" id="CHEBI:37565"/>
    </ligand>
</feature>
<feature type="binding site" evidence="2">
    <location>
        <begin position="821"/>
        <end position="822"/>
    </location>
    <ligand>
        <name>GTP</name>
        <dbReference type="ChEBI" id="CHEBI:37565"/>
    </ligand>
</feature>
<feature type="modified residue" description="Phosphoserine" evidence="2">
    <location>
        <position position="66"/>
    </location>
</feature>
<feature type="modified residue" description="Phosphothreonine" evidence="3">
    <location>
        <position position="107"/>
    </location>
</feature>
<feature type="modified residue" description="Phosphoserine" evidence="2">
    <location>
        <position position="108"/>
    </location>
</feature>
<feature type="modified residue" description="Phosphoserine" evidence="2">
    <location>
        <position position="114"/>
    </location>
</feature>
<feature type="modified residue" description="Phosphoserine" evidence="2">
    <location>
        <position position="137"/>
    </location>
</feature>
<feature type="modified residue" description="Phosphoserine" evidence="2">
    <location>
        <position position="139"/>
    </location>
</feature>
<feature type="modified residue" description="Phosphoserine" evidence="2">
    <location>
        <position position="165"/>
    </location>
</feature>
<feature type="modified residue" description="Phosphoserine" evidence="2">
    <location>
        <position position="172"/>
    </location>
</feature>
<feature type="modified residue" description="Phosphoserine" evidence="2">
    <location>
        <position position="183"/>
    </location>
</feature>
<feature type="modified residue" description="Phosphoserine" evidence="2">
    <location>
        <position position="184"/>
    </location>
</feature>
<feature type="modified residue" description="Phosphoserine" evidence="2">
    <location>
        <position position="187"/>
    </location>
</feature>
<feature type="modified residue" description="Phosphoserine" evidence="2">
    <location>
        <position position="191"/>
    </location>
</feature>
<feature type="modified residue" description="Phosphoserine" evidence="3">
    <location>
        <position position="209"/>
    </location>
</feature>
<feature type="modified residue" description="Phosphoserine" evidence="2">
    <location>
        <position position="215"/>
    </location>
</feature>
<feature type="modified residue" description="Phosphoserine" evidence="2">
    <location>
        <position position="223"/>
    </location>
</feature>
<feature type="modified residue" description="Phosphoserine" evidence="2">
    <location>
        <position position="437"/>
    </location>
</feature>
<feature type="modified residue" description="Phosphothreonine" evidence="2">
    <location>
        <position position="497"/>
    </location>
</feature>
<feature type="modified residue" description="Phosphoserine" evidence="8">
    <location>
        <position position="544"/>
    </location>
</feature>
<feature type="modified residue" description="Phosphoserine" evidence="8">
    <location>
        <position position="553"/>
    </location>
</feature>
<feature type="modified residue" description="Phosphoserine" evidence="8">
    <location>
        <position position="556"/>
    </location>
</feature>
<feature type="modified residue" description="Phosphoserine" evidence="2">
    <location>
        <position position="584"/>
    </location>
</feature>
<feature type="modified residue" description="Phosphoserine" evidence="2">
    <location>
        <position position="585"/>
    </location>
</feature>
<feature type="modified residue" description="Phosphoserine" evidence="2">
    <location>
        <position position="587"/>
    </location>
</feature>
<feature type="modified residue" description="Phosphoserine" evidence="2">
    <location>
        <position position="591"/>
    </location>
</feature>
<feature type="modified residue" description="Phosphoserine" evidence="2">
    <location>
        <position position="1164"/>
    </location>
</feature>
<feature type="sequence conflict" description="In Ref. 1; AAI26103/AAI67065." evidence="7" ref="1">
    <original>E</original>
    <variation>K</variation>
    <location>
        <position position="393"/>
    </location>
</feature>
<accession>B2GUV7</accession>
<accession>A0JN31</accession>
<accession>P70488</accession>
<comment type="function">
    <text evidence="2">Plays a role in translation initiation. Ribosome-dependent GTPase that promotes the joining of the 60S ribosomal subunit to the pre-initiation complex to form the 80S initiation complex with the initiator methionine-tRNA in the P-site base paired to the start codon. Together with eIF1A (EIF1AX), actively orients the initiator methionine-tRNA in a conformation that allows 60S ribosomal subunit joining to form the 80S initiation complex. Is released after formation of the 80S initiation complex. Its GTPase activity is not essential for ribosomal subunits joining, but GTP hydrolysis is needed for eIF1A (EIF1AX) ejection quickly followed by EIF5B release to form elongation-competent ribosomes. In contrast to its procaryotic homolog, does not promote recruitment of Met-rRNA to the small ribosomal subunit.</text>
</comment>
<comment type="catalytic activity">
    <reaction evidence="2">
        <text>GTP + H2O = GDP + phosphate + H(+)</text>
        <dbReference type="Rhea" id="RHEA:19669"/>
        <dbReference type="ChEBI" id="CHEBI:15377"/>
        <dbReference type="ChEBI" id="CHEBI:15378"/>
        <dbReference type="ChEBI" id="CHEBI:37565"/>
        <dbReference type="ChEBI" id="CHEBI:43474"/>
        <dbReference type="ChEBI" id="CHEBI:58189"/>
        <dbReference type="EC" id="3.6.5.3"/>
    </reaction>
    <physiologicalReaction direction="left-to-right" evidence="2">
        <dbReference type="Rhea" id="RHEA:19670"/>
    </physiologicalReaction>
</comment>
<comment type="cofactor">
    <cofactor evidence="1">
        <name>a monovalent cation</name>
        <dbReference type="ChEBI" id="CHEBI:60242"/>
    </cofactor>
    <text evidence="1">Binds 1 monovalent cation per monomer in the active site. Structural cofactor that stabilizes the GTP-bound 'on' state. May also act as a transition state stabilizer of the hydrolysis reaction.</text>
</comment>
<comment type="subunit">
    <text evidence="2 6">Interacts through its C-terminal domain (CTD) with the CTD of eIF1A (EIF1AX) or with the CTD of EIF5 (mutually exclusive) through a common binding site. Interacts with eIF1A (EIF1AX) from the location of the start codon by the 43S complex until the formation of the 80S complex (By similarity). Interacts with ANXA5 in a calcium and phospholipid-dependent manner (PubMed:8667030).</text>
</comment>
<comment type="subcellular location">
    <subcellularLocation>
        <location evidence="3">Cytoplasm</location>
    </subcellularLocation>
</comment>
<comment type="similarity">
    <text evidence="7">Belongs to the TRAFAC class translation factor GTPase superfamily. Classic translation factor GTPase family. IF-2 subfamily.</text>
</comment>
<comment type="sequence caution" evidence="7">
    <conflict type="miscellaneous discrepancy">
        <sequence resource="EMBL-CDS" id="AAI26103"/>
    </conflict>
    <text>Contaminating sequence. Potential poly-A sequence.</text>
</comment>
<comment type="sequence caution" evidence="7">
    <conflict type="miscellaneous discrepancy">
        <sequence resource="EMBL-CDS" id="AAI67065"/>
    </conflict>
    <text>Contaminating sequence. Potential poly-A sequence.</text>
</comment>
<protein>
    <recommendedName>
        <fullName>Eukaryotic translation initiation factor 5B</fullName>
        <shortName>eIF-5B</shortName>
        <ecNumber>3.6.5.3</ecNumber>
    </recommendedName>
    <alternativeName>
        <fullName>Annexin V-binding protein ABP-7</fullName>
    </alternativeName>
    <alternativeName>
        <fullName>Translation initiation factor IF-2</fullName>
    </alternativeName>
</protein>
<sequence>MGKKQKNKSEDSTKDDTDLGALAAEIEGAGAAKEQEPQKGKGKKKKEKKKQDFDENDILRELEELSLEAQGIGADRDAATVKPTENNEEESASKQDKKKKGQKGKKTSFDENDSEELEDKDSKSKKPARPNSEVLLSGSEDADDPNKLSKKGKKAQKSTKKRDGSEEDEDNSKRSKERSRVNSSGESGGESDEFLQSRKGQKKNQKNKSVPTIDSGNEDDDSSFKIKTVAQKKAEKKERERKKREEEKAKLRKVKEKEELEKGRKEQSKQREPQKRPDEEVLVLRGTPDAGAASEEKGDIAATLEDDNEGDKKKKDKKKKKTEKDDKEKEKKKGPSKSTVKAIQEALAKLREEEERQKREEEERIKRLEELEAKRKEEERLEQEKRERKKQKEKERKERLKKEGKLLTKSQREARARAEVTLRHLQAQGVEVPSKDSLPKKRPVYEDKKKKKTPQQLESKEALETVEVSAPVEVVDQGVPEKEETPPSVDAEEDEETEDAGLDDWEAMASDEEREKEGNMIHIEVEENPEEEEEEEEDEDEEDSEDEEDEGDSEGSDGDEEDYKLSDEKDLGKAGDTKPNKDASSDSEYDSDDDRTKEERAYDKAKRRIEKRRLEHGKNVNTEKLRAPIICVLGHVDTGKTKILDKLRHTHVQDGEAGGITQQIGATNVPLEAINEQTKMIKNFDRENVRIPGMLIIDTPGHESFSNLRNRGSSLCDIAILVVDIMHGLEPQTIESINILKSKKCPFIVALNKIDRLYDWKKSPDSDVAVTLKKQKKNTKDEFEERAKAIIVEFAQQGLNAALFYENKDPRTFVSLVPTSAHTGDGMGSLIYLLVELTQTMLSKRLAHCEELRAQVMEVKALPGMGTTIDVILINGRLKEGDTIIVPGVEGPIVTQIRGLLLPPPMKELRVKNQYEKHKEVEAAQGVKILGKDLEKTLAGLPLLVAYKDDEIPVLKDELIHELKQTLNAIKLEEKGVYVQASTLGSLEALLEFLKTSEVPYAGINIGPVHKKDVMKASVMLEHDPQYAVILAFDVRIERDAQEMADSLGVRIFSAEIIYHLFDAFTKYRQDYKKQKQEEFKHIAVFPCKMKILPQYIFNSRDPIVIGVTVEAGQVKQGTPMCVPSKNFVDIGIVTSIEINHKQVDVAKKGQEVCVKIEPIPGESPKMFGRHFEATDILVSKISRQSIDALKDWFRDEMQKSDWQLIVELKKVFEII</sequence>
<dbReference type="EC" id="3.6.5.3"/>
<dbReference type="EMBL" id="BC126102">
    <property type="protein sequence ID" value="AAI26103.1"/>
    <property type="status" value="ALT_SEQ"/>
    <property type="molecule type" value="mRNA"/>
</dbReference>
<dbReference type="EMBL" id="BC166424">
    <property type="protein sequence ID" value="AAI66424.1"/>
    <property type="molecule type" value="mRNA"/>
</dbReference>
<dbReference type="EMBL" id="BC167065">
    <property type="protein sequence ID" value="AAI67065.1"/>
    <property type="status" value="ALT_SEQ"/>
    <property type="molecule type" value="mRNA"/>
</dbReference>
<dbReference type="EMBL" id="D64061">
    <property type="protein sequence ID" value="BAA10937.1"/>
    <property type="molecule type" value="mRNA"/>
</dbReference>
<dbReference type="RefSeq" id="NP_001103611.1">
    <property type="nucleotide sequence ID" value="NM_001110141.1"/>
</dbReference>
<dbReference type="SMR" id="B2GUV7"/>
<dbReference type="BioGRID" id="258950">
    <property type="interactions" value="2"/>
</dbReference>
<dbReference type="FunCoup" id="B2GUV7">
    <property type="interactions" value="3671"/>
</dbReference>
<dbReference type="IntAct" id="B2GUV7">
    <property type="interactions" value="4"/>
</dbReference>
<dbReference type="STRING" id="10116.ENSRNOP00000065578"/>
<dbReference type="iPTMnet" id="B2GUV7"/>
<dbReference type="PhosphoSitePlus" id="B2GUV7"/>
<dbReference type="jPOST" id="B2GUV7"/>
<dbReference type="PaxDb" id="10116-ENSRNOP00000036844"/>
<dbReference type="PeptideAtlas" id="B2GUV7"/>
<dbReference type="Ensembl" id="ENSRNOT00000114110.1">
    <property type="protein sequence ID" value="ENSRNOP00000079088.1"/>
    <property type="gene ID" value="ENSRNOG00000023356.6"/>
</dbReference>
<dbReference type="GeneID" id="308306"/>
<dbReference type="KEGG" id="rno:308306"/>
<dbReference type="AGR" id="RGD:735017"/>
<dbReference type="CTD" id="9669"/>
<dbReference type="RGD" id="735017">
    <property type="gene designation" value="Eif5b"/>
</dbReference>
<dbReference type="eggNOG" id="KOG1144">
    <property type="taxonomic scope" value="Eukaryota"/>
</dbReference>
<dbReference type="GeneTree" id="ENSGT00940000162583"/>
<dbReference type="HOGENOM" id="CLU_002656_0_1_1"/>
<dbReference type="InParanoid" id="B2GUV7"/>
<dbReference type="OMA" id="EFAVMLC"/>
<dbReference type="OrthoDB" id="86492at9989"/>
<dbReference type="PhylomeDB" id="B2GUV7"/>
<dbReference type="TreeFam" id="TF101535"/>
<dbReference type="Reactome" id="R-RNO-72706">
    <property type="pathway name" value="GTP hydrolysis and joining of the 60S ribosomal subunit"/>
</dbReference>
<dbReference type="PRO" id="PR:B2GUV7"/>
<dbReference type="Proteomes" id="UP000002494">
    <property type="component" value="Chromosome 9"/>
</dbReference>
<dbReference type="GO" id="GO:0005737">
    <property type="term" value="C:cytoplasm"/>
    <property type="evidence" value="ECO:0000266"/>
    <property type="project" value="RGD"/>
</dbReference>
<dbReference type="GO" id="GO:0045202">
    <property type="term" value="C:synapse"/>
    <property type="evidence" value="ECO:0000266"/>
    <property type="project" value="RGD"/>
</dbReference>
<dbReference type="GO" id="GO:0005525">
    <property type="term" value="F:GTP binding"/>
    <property type="evidence" value="ECO:0000266"/>
    <property type="project" value="RGD"/>
</dbReference>
<dbReference type="GO" id="GO:0003924">
    <property type="term" value="F:GTPase activity"/>
    <property type="evidence" value="ECO:0000266"/>
    <property type="project" value="RGD"/>
</dbReference>
<dbReference type="GO" id="GO:0046872">
    <property type="term" value="F:metal ion binding"/>
    <property type="evidence" value="ECO:0007669"/>
    <property type="project" value="UniProtKB-KW"/>
</dbReference>
<dbReference type="GO" id="GO:0003743">
    <property type="term" value="F:translation initiation factor activity"/>
    <property type="evidence" value="ECO:0000266"/>
    <property type="project" value="RGD"/>
</dbReference>
<dbReference type="GO" id="GO:0000049">
    <property type="term" value="F:tRNA binding"/>
    <property type="evidence" value="ECO:0000266"/>
    <property type="project" value="RGD"/>
</dbReference>
<dbReference type="GO" id="GO:0006446">
    <property type="term" value="P:regulation of translational initiation"/>
    <property type="evidence" value="ECO:0000266"/>
    <property type="project" value="RGD"/>
</dbReference>
<dbReference type="GO" id="GO:0042255">
    <property type="term" value="P:ribosome assembly"/>
    <property type="evidence" value="ECO:0000266"/>
    <property type="project" value="RGD"/>
</dbReference>
<dbReference type="GO" id="GO:0006413">
    <property type="term" value="P:translational initiation"/>
    <property type="evidence" value="ECO:0000318"/>
    <property type="project" value="GO_Central"/>
</dbReference>
<dbReference type="CDD" id="cd03703">
    <property type="entry name" value="aeIF5B_II"/>
    <property type="match status" value="1"/>
</dbReference>
<dbReference type="CDD" id="cd16266">
    <property type="entry name" value="IF2_aeIF5B_IV"/>
    <property type="match status" value="1"/>
</dbReference>
<dbReference type="CDD" id="cd01887">
    <property type="entry name" value="IF2_eIF5B"/>
    <property type="match status" value="1"/>
</dbReference>
<dbReference type="FunFam" id="2.40.30.10:FF:000026">
    <property type="entry name" value="Eukaryotic translation initiation factor 5B"/>
    <property type="match status" value="1"/>
</dbReference>
<dbReference type="FunFam" id="3.40.50.10050:FF:000002">
    <property type="entry name" value="Eukaryotic translation initiation factor 5B"/>
    <property type="match status" value="1"/>
</dbReference>
<dbReference type="FunFam" id="3.40.50.300:FF:000112">
    <property type="entry name" value="Eukaryotic translation initiation factor 5B"/>
    <property type="match status" value="1"/>
</dbReference>
<dbReference type="FunFam" id="2.40.30.10:FF:000013">
    <property type="entry name" value="eukaryotic translation initiation factor 5B"/>
    <property type="match status" value="1"/>
</dbReference>
<dbReference type="Gene3D" id="3.40.50.300">
    <property type="entry name" value="P-loop containing nucleotide triphosphate hydrolases"/>
    <property type="match status" value="1"/>
</dbReference>
<dbReference type="Gene3D" id="2.40.30.10">
    <property type="entry name" value="Translation factors"/>
    <property type="match status" value="2"/>
</dbReference>
<dbReference type="Gene3D" id="3.40.50.10050">
    <property type="entry name" value="Translation initiation factor IF- 2, domain 3"/>
    <property type="match status" value="1"/>
</dbReference>
<dbReference type="InterPro" id="IPR029459">
    <property type="entry name" value="EFTU-type"/>
</dbReference>
<dbReference type="InterPro" id="IPR027417">
    <property type="entry name" value="P-loop_NTPase"/>
</dbReference>
<dbReference type="InterPro" id="IPR005225">
    <property type="entry name" value="Small_GTP-bd"/>
</dbReference>
<dbReference type="InterPro" id="IPR000795">
    <property type="entry name" value="T_Tr_GTP-bd_dom"/>
</dbReference>
<dbReference type="InterPro" id="IPR015760">
    <property type="entry name" value="TIF_IF2"/>
</dbReference>
<dbReference type="InterPro" id="IPR023115">
    <property type="entry name" value="TIF_IF2_dom3"/>
</dbReference>
<dbReference type="InterPro" id="IPR036925">
    <property type="entry name" value="TIF_IF2_dom3_sf"/>
</dbReference>
<dbReference type="InterPro" id="IPR009000">
    <property type="entry name" value="Transl_B-barrel_sf"/>
</dbReference>
<dbReference type="NCBIfam" id="NF003078">
    <property type="entry name" value="PRK04004.1"/>
    <property type="match status" value="1"/>
</dbReference>
<dbReference type="NCBIfam" id="TIGR00231">
    <property type="entry name" value="small_GTP"/>
    <property type="match status" value="1"/>
</dbReference>
<dbReference type="PANTHER" id="PTHR43381:SF4">
    <property type="entry name" value="EUKARYOTIC TRANSLATION INITIATION FACTOR 5B"/>
    <property type="match status" value="1"/>
</dbReference>
<dbReference type="PANTHER" id="PTHR43381">
    <property type="entry name" value="TRANSLATION INITIATION FACTOR IF-2-RELATED"/>
    <property type="match status" value="1"/>
</dbReference>
<dbReference type="Pfam" id="PF00009">
    <property type="entry name" value="GTP_EFTU"/>
    <property type="match status" value="1"/>
</dbReference>
<dbReference type="Pfam" id="PF14578">
    <property type="entry name" value="GTP_EFTU_D4"/>
    <property type="match status" value="1"/>
</dbReference>
<dbReference type="Pfam" id="PF11987">
    <property type="entry name" value="IF-2"/>
    <property type="match status" value="1"/>
</dbReference>
<dbReference type="PRINTS" id="PR00315">
    <property type="entry name" value="ELONGATNFCT"/>
</dbReference>
<dbReference type="SUPFAM" id="SSF52156">
    <property type="entry name" value="Initiation factor IF2/eIF5b, domain 3"/>
    <property type="match status" value="1"/>
</dbReference>
<dbReference type="SUPFAM" id="SSF52540">
    <property type="entry name" value="P-loop containing nucleoside triphosphate hydrolases"/>
    <property type="match status" value="1"/>
</dbReference>
<dbReference type="SUPFAM" id="SSF50447">
    <property type="entry name" value="Translation proteins"/>
    <property type="match status" value="1"/>
</dbReference>
<dbReference type="PROSITE" id="PS51722">
    <property type="entry name" value="G_TR_2"/>
    <property type="match status" value="1"/>
</dbReference>
<name>IF2P_RAT</name>